<evidence type="ECO:0000255" key="1">
    <source>
        <dbReference type="HAMAP-Rule" id="MF_00388"/>
    </source>
</evidence>
<keyword id="KW-0378">Hydrolase</keyword>
<keyword id="KW-0441">Lipid A biosynthesis</keyword>
<keyword id="KW-0444">Lipid biosynthesis</keyword>
<keyword id="KW-0443">Lipid metabolism</keyword>
<keyword id="KW-0479">Metal-binding</keyword>
<keyword id="KW-0862">Zinc</keyword>
<gene>
    <name evidence="1" type="primary">lpxC</name>
    <name type="ordered locus">SNSL254_A0146</name>
</gene>
<sequence length="305" mass="33985">MIKQRTLKRIVQATGVGLHTGKKVTLTLRPAPANTGVIYRRTDLNPPVDFPADAKSVRDTMLCTCLVNEHDVRISTVEHLNAALAGLGIDNIVIEVNAPEIPIMDGSAAPFVYLLLDAGIDELNCAKKFVRIKETVRVEDGDKWAEFRPYNGFTLDFTIDFNHPAIDSSSQRYAMNFSADAFMRQISRARTFGFMRDIEYLQSRGLCLGGSFDCAIVVDDYRVLNEDGLRFEDEFVRHKMLDAIGDLFMCGHNIIGAFTAYKSGHALNNKLLQAVLAKQEAWEFVTFQDDAELPLAFKAPSTVLA</sequence>
<reference key="1">
    <citation type="journal article" date="2011" name="J. Bacteriol.">
        <title>Comparative genomics of 28 Salmonella enterica isolates: evidence for CRISPR-mediated adaptive sublineage evolution.</title>
        <authorList>
            <person name="Fricke W.F."/>
            <person name="Mammel M.K."/>
            <person name="McDermott P.F."/>
            <person name="Tartera C."/>
            <person name="White D.G."/>
            <person name="Leclerc J.E."/>
            <person name="Ravel J."/>
            <person name="Cebula T.A."/>
        </authorList>
    </citation>
    <scope>NUCLEOTIDE SEQUENCE [LARGE SCALE GENOMIC DNA]</scope>
    <source>
        <strain>SL254</strain>
    </source>
</reference>
<organism>
    <name type="scientific">Salmonella newport (strain SL254)</name>
    <dbReference type="NCBI Taxonomy" id="423368"/>
    <lineage>
        <taxon>Bacteria</taxon>
        <taxon>Pseudomonadati</taxon>
        <taxon>Pseudomonadota</taxon>
        <taxon>Gammaproteobacteria</taxon>
        <taxon>Enterobacterales</taxon>
        <taxon>Enterobacteriaceae</taxon>
        <taxon>Salmonella</taxon>
    </lineage>
</organism>
<dbReference type="EC" id="3.5.1.108" evidence="1"/>
<dbReference type="EMBL" id="CP001113">
    <property type="protein sequence ID" value="ACF61410.1"/>
    <property type="molecule type" value="Genomic_DNA"/>
</dbReference>
<dbReference type="RefSeq" id="WP_000595487.1">
    <property type="nucleotide sequence ID" value="NZ_CCMR01000003.1"/>
</dbReference>
<dbReference type="SMR" id="B4SU56"/>
<dbReference type="KEGG" id="see:SNSL254_A0146"/>
<dbReference type="HOGENOM" id="CLU_046528_1_0_6"/>
<dbReference type="UniPathway" id="UPA00359">
    <property type="reaction ID" value="UER00478"/>
</dbReference>
<dbReference type="Proteomes" id="UP000008824">
    <property type="component" value="Chromosome"/>
</dbReference>
<dbReference type="GO" id="GO:0016020">
    <property type="term" value="C:membrane"/>
    <property type="evidence" value="ECO:0007669"/>
    <property type="project" value="GOC"/>
</dbReference>
<dbReference type="GO" id="GO:0046872">
    <property type="term" value="F:metal ion binding"/>
    <property type="evidence" value="ECO:0007669"/>
    <property type="project" value="UniProtKB-KW"/>
</dbReference>
<dbReference type="GO" id="GO:0103117">
    <property type="term" value="F:UDP-3-O-acyl-N-acetylglucosamine deacetylase activity"/>
    <property type="evidence" value="ECO:0007669"/>
    <property type="project" value="UniProtKB-UniRule"/>
</dbReference>
<dbReference type="GO" id="GO:0009245">
    <property type="term" value="P:lipid A biosynthetic process"/>
    <property type="evidence" value="ECO:0007669"/>
    <property type="project" value="UniProtKB-UniRule"/>
</dbReference>
<dbReference type="FunFam" id="3.30.1700.10:FF:000001">
    <property type="entry name" value="UDP-3-O-acyl-N-acetylglucosamine deacetylase"/>
    <property type="match status" value="1"/>
</dbReference>
<dbReference type="FunFam" id="3.30.230.20:FF:000001">
    <property type="entry name" value="UDP-3-O-acyl-N-acetylglucosamine deacetylase"/>
    <property type="match status" value="1"/>
</dbReference>
<dbReference type="Gene3D" id="3.30.230.20">
    <property type="entry name" value="lpxc deacetylase, domain 1"/>
    <property type="match status" value="1"/>
</dbReference>
<dbReference type="Gene3D" id="3.30.1700.10">
    <property type="entry name" value="lpxc deacetylase, domain 2"/>
    <property type="match status" value="1"/>
</dbReference>
<dbReference type="HAMAP" id="MF_00388">
    <property type="entry name" value="LpxC"/>
    <property type="match status" value="1"/>
</dbReference>
<dbReference type="InterPro" id="IPR020568">
    <property type="entry name" value="Ribosomal_Su5_D2-typ_SF"/>
</dbReference>
<dbReference type="InterPro" id="IPR004463">
    <property type="entry name" value="UDP-acyl_GlcNac_deAcase"/>
</dbReference>
<dbReference type="InterPro" id="IPR011334">
    <property type="entry name" value="UDP-acyl_GlcNac_deAcase_C"/>
</dbReference>
<dbReference type="InterPro" id="IPR015870">
    <property type="entry name" value="UDP-acyl_N-AcGlcN_deAcase_N"/>
</dbReference>
<dbReference type="NCBIfam" id="TIGR00325">
    <property type="entry name" value="lpxC"/>
    <property type="match status" value="1"/>
</dbReference>
<dbReference type="PANTHER" id="PTHR33694">
    <property type="entry name" value="UDP-3-O-ACYL-N-ACETYLGLUCOSAMINE DEACETYLASE 1, MITOCHONDRIAL-RELATED"/>
    <property type="match status" value="1"/>
</dbReference>
<dbReference type="PANTHER" id="PTHR33694:SF1">
    <property type="entry name" value="UDP-3-O-ACYL-N-ACETYLGLUCOSAMINE DEACETYLASE 1, MITOCHONDRIAL-RELATED"/>
    <property type="match status" value="1"/>
</dbReference>
<dbReference type="Pfam" id="PF03331">
    <property type="entry name" value="LpxC"/>
    <property type="match status" value="1"/>
</dbReference>
<dbReference type="SUPFAM" id="SSF54211">
    <property type="entry name" value="Ribosomal protein S5 domain 2-like"/>
    <property type="match status" value="2"/>
</dbReference>
<protein>
    <recommendedName>
        <fullName evidence="1">UDP-3-O-acyl-N-acetylglucosamine deacetylase</fullName>
        <shortName evidence="1">UDP-3-O-acyl-GlcNAc deacetylase</shortName>
        <ecNumber evidence="1">3.5.1.108</ecNumber>
    </recommendedName>
    <alternativeName>
        <fullName evidence="1">UDP-3-O-[R-3-hydroxymyristoyl]-N-acetylglucosamine deacetylase</fullName>
    </alternativeName>
</protein>
<name>LPXC_SALNS</name>
<feature type="chain" id="PRO_1000122818" description="UDP-3-O-acyl-N-acetylglucosamine deacetylase">
    <location>
        <begin position="1"/>
        <end position="305"/>
    </location>
</feature>
<feature type="active site" description="Proton donor" evidence="1">
    <location>
        <position position="265"/>
    </location>
</feature>
<feature type="binding site" evidence="1">
    <location>
        <position position="79"/>
    </location>
    <ligand>
        <name>Zn(2+)</name>
        <dbReference type="ChEBI" id="CHEBI:29105"/>
    </ligand>
</feature>
<feature type="binding site" evidence="1">
    <location>
        <position position="238"/>
    </location>
    <ligand>
        <name>Zn(2+)</name>
        <dbReference type="ChEBI" id="CHEBI:29105"/>
    </ligand>
</feature>
<feature type="binding site" evidence="1">
    <location>
        <position position="242"/>
    </location>
    <ligand>
        <name>Zn(2+)</name>
        <dbReference type="ChEBI" id="CHEBI:29105"/>
    </ligand>
</feature>
<accession>B4SU56</accession>
<comment type="function">
    <text evidence="1">Catalyzes the hydrolysis of UDP-3-O-myristoyl-N-acetylglucosamine to form UDP-3-O-myristoylglucosamine and acetate, the committed step in lipid A biosynthesis.</text>
</comment>
<comment type="catalytic activity">
    <reaction evidence="1">
        <text>a UDP-3-O-[(3R)-3-hydroxyacyl]-N-acetyl-alpha-D-glucosamine + H2O = a UDP-3-O-[(3R)-3-hydroxyacyl]-alpha-D-glucosamine + acetate</text>
        <dbReference type="Rhea" id="RHEA:67816"/>
        <dbReference type="ChEBI" id="CHEBI:15377"/>
        <dbReference type="ChEBI" id="CHEBI:30089"/>
        <dbReference type="ChEBI" id="CHEBI:137740"/>
        <dbReference type="ChEBI" id="CHEBI:173225"/>
        <dbReference type="EC" id="3.5.1.108"/>
    </reaction>
</comment>
<comment type="cofactor">
    <cofactor evidence="1">
        <name>Zn(2+)</name>
        <dbReference type="ChEBI" id="CHEBI:29105"/>
    </cofactor>
</comment>
<comment type="pathway">
    <text evidence="1">Glycolipid biosynthesis; lipid IV(A) biosynthesis; lipid IV(A) from (3R)-3-hydroxytetradecanoyl-[acyl-carrier-protein] and UDP-N-acetyl-alpha-D-glucosamine: step 2/6.</text>
</comment>
<comment type="similarity">
    <text evidence="1">Belongs to the LpxC family.</text>
</comment>
<proteinExistence type="inferred from homology"/>